<reference key="1">
    <citation type="journal article" date="2001" name="Nature">
        <title>Genome sequence of enterohaemorrhagic Escherichia coli O157:H7.</title>
        <authorList>
            <person name="Perna N.T."/>
            <person name="Plunkett G. III"/>
            <person name="Burland V."/>
            <person name="Mau B."/>
            <person name="Glasner J.D."/>
            <person name="Rose D.J."/>
            <person name="Mayhew G.F."/>
            <person name="Evans P.S."/>
            <person name="Gregor J."/>
            <person name="Kirkpatrick H.A."/>
            <person name="Posfai G."/>
            <person name="Hackett J."/>
            <person name="Klink S."/>
            <person name="Boutin A."/>
            <person name="Shao Y."/>
            <person name="Miller L."/>
            <person name="Grotbeck E.J."/>
            <person name="Davis N.W."/>
            <person name="Lim A."/>
            <person name="Dimalanta E.T."/>
            <person name="Potamousis K."/>
            <person name="Apodaca J."/>
            <person name="Anantharaman T.S."/>
            <person name="Lin J."/>
            <person name="Yen G."/>
            <person name="Schwartz D.C."/>
            <person name="Welch R.A."/>
            <person name="Blattner F.R."/>
        </authorList>
    </citation>
    <scope>NUCLEOTIDE SEQUENCE [LARGE SCALE GENOMIC DNA]</scope>
    <source>
        <strain>O157:H7 / EDL933 / ATCC 700927 / EHEC</strain>
    </source>
</reference>
<reference key="2">
    <citation type="journal article" date="2001" name="DNA Res.">
        <title>Complete genome sequence of enterohemorrhagic Escherichia coli O157:H7 and genomic comparison with a laboratory strain K-12.</title>
        <authorList>
            <person name="Hayashi T."/>
            <person name="Makino K."/>
            <person name="Ohnishi M."/>
            <person name="Kurokawa K."/>
            <person name="Ishii K."/>
            <person name="Yokoyama K."/>
            <person name="Han C.-G."/>
            <person name="Ohtsubo E."/>
            <person name="Nakayama K."/>
            <person name="Murata T."/>
            <person name="Tanaka M."/>
            <person name="Tobe T."/>
            <person name="Iida T."/>
            <person name="Takami H."/>
            <person name="Honda T."/>
            <person name="Sasakawa C."/>
            <person name="Ogasawara N."/>
            <person name="Yasunaga T."/>
            <person name="Kuhara S."/>
            <person name="Shiba T."/>
            <person name="Hattori M."/>
            <person name="Shinagawa H."/>
        </authorList>
    </citation>
    <scope>NUCLEOTIDE SEQUENCE [LARGE SCALE GENOMIC DNA]</scope>
    <source>
        <strain>O157:H7 / Sakai / RIMD 0509952 / EHEC</strain>
    </source>
</reference>
<keyword id="KW-1185">Reference proteome</keyword>
<feature type="chain" id="PRO_0000252229" description="Fimbrial usher domain-containing protein YdeT">
    <location>
        <begin position="1"/>
        <end position="382"/>
    </location>
</feature>
<feature type="sequence conflict" description="In Ref. 2; BAB35533." evidence="1" ref="2">
    <original>G</original>
    <variation>D</variation>
    <location>
        <position position="31"/>
    </location>
</feature>
<name>YDET_ECO57</name>
<evidence type="ECO:0000305" key="1"/>
<gene>
    <name type="primary">ydeT</name>
    <name type="ordered locus">Z2202</name>
    <name type="ordered locus">ECs2110</name>
</gene>
<accession>Q7DBJ9</accession>
<accession>Q8X2C6</accession>
<organism>
    <name type="scientific">Escherichia coli O157:H7</name>
    <dbReference type="NCBI Taxonomy" id="83334"/>
    <lineage>
        <taxon>Bacteria</taxon>
        <taxon>Pseudomonadati</taxon>
        <taxon>Pseudomonadota</taxon>
        <taxon>Gammaproteobacteria</taxon>
        <taxon>Enterobacterales</taxon>
        <taxon>Enterobacteriaceae</taxon>
        <taxon>Escherichia</taxon>
    </lineage>
</organism>
<proteinExistence type="predicted"/>
<dbReference type="EMBL" id="AE005174">
    <property type="protein sequence ID" value="AAG56263.1"/>
    <property type="molecule type" value="Genomic_DNA"/>
</dbReference>
<dbReference type="EMBL" id="BA000007">
    <property type="protein sequence ID" value="BAB35533.1"/>
    <property type="molecule type" value="Genomic_DNA"/>
</dbReference>
<dbReference type="PIR" id="F90892">
    <property type="entry name" value="F90892"/>
</dbReference>
<dbReference type="RefSeq" id="NP_310137.1">
    <property type="nucleotide sequence ID" value="NC_002695.1"/>
</dbReference>
<dbReference type="SMR" id="Q7DBJ9"/>
<dbReference type="STRING" id="155864.Z2202"/>
<dbReference type="KEGG" id="ece:Z2202"/>
<dbReference type="KEGG" id="ecs:ECs_2110"/>
<dbReference type="PATRIC" id="fig|386585.9.peg.2216"/>
<dbReference type="eggNOG" id="COG3188">
    <property type="taxonomic scope" value="Bacteria"/>
</dbReference>
<dbReference type="HOGENOM" id="CLU_009120_4_0_6"/>
<dbReference type="Proteomes" id="UP000000558">
    <property type="component" value="Chromosome"/>
</dbReference>
<dbReference type="Proteomes" id="UP000002519">
    <property type="component" value="Chromosome"/>
</dbReference>
<dbReference type="GO" id="GO:0009279">
    <property type="term" value="C:cell outer membrane"/>
    <property type="evidence" value="ECO:0007669"/>
    <property type="project" value="TreeGrafter"/>
</dbReference>
<dbReference type="GO" id="GO:0015473">
    <property type="term" value="F:fimbrial usher porin activity"/>
    <property type="evidence" value="ECO:0007669"/>
    <property type="project" value="InterPro"/>
</dbReference>
<dbReference type="GO" id="GO:0009297">
    <property type="term" value="P:pilus assembly"/>
    <property type="evidence" value="ECO:0007669"/>
    <property type="project" value="InterPro"/>
</dbReference>
<dbReference type="FunFam" id="2.60.40.2610:FF:000001">
    <property type="entry name" value="Outer membrane fimbrial usher protein"/>
    <property type="match status" value="1"/>
</dbReference>
<dbReference type="Gene3D" id="2.60.40.2070">
    <property type="match status" value="1"/>
</dbReference>
<dbReference type="Gene3D" id="2.60.40.2610">
    <property type="entry name" value="Outer membrane usher protein FimD, plug domain"/>
    <property type="match status" value="1"/>
</dbReference>
<dbReference type="InterPro" id="IPR000015">
    <property type="entry name" value="Fimb_usher"/>
</dbReference>
<dbReference type="InterPro" id="IPR042186">
    <property type="entry name" value="FimD_plug_dom"/>
</dbReference>
<dbReference type="InterPro" id="IPR025949">
    <property type="entry name" value="PapC-like_C"/>
</dbReference>
<dbReference type="InterPro" id="IPR043142">
    <property type="entry name" value="PapC-like_C_sf"/>
</dbReference>
<dbReference type="PANTHER" id="PTHR30451:SF21">
    <property type="entry name" value="FIMBRIAL USHER DOMAIN-CONTAINING PROTEIN YDET-RELATED"/>
    <property type="match status" value="1"/>
</dbReference>
<dbReference type="PANTHER" id="PTHR30451">
    <property type="entry name" value="OUTER MEMBRANE USHER PROTEIN"/>
    <property type="match status" value="1"/>
</dbReference>
<dbReference type="Pfam" id="PF13953">
    <property type="entry name" value="PapC_C"/>
    <property type="match status" value="1"/>
</dbReference>
<dbReference type="Pfam" id="PF00577">
    <property type="entry name" value="Usher"/>
    <property type="match status" value="1"/>
</dbReference>
<sequence>MSGYTVKPPTGDSNEQTQFIDYFNLFYSKRGQEQISISQQLGNYGATFFSASRQSYWNTSRSDQQISFGLNVPFGDITTSLNYSYSNNIWQNDRDHLLAFTLNVPFSHWMRTDSQSAFRNSNASYSMSNDLKGGMTNLSGVYGTLLPDNNLNYSVQVGNTHGGNTSSGTSGYSTLNYRGAYGNTNVGYSRSGDSSQIYYGMSGGIIAHADGITFGQPLGDTMVLVKAPGADNVKIENQTGIHTDWRGYAILPFATEYRENRVALNANSLADNVELDETVVTVIPTHGAIARATFNAQIGGKVLMTLKYGNKSVPFGAIVTHGENKNGSIVAENGQVYLTGLPQSGKLQVSWGNDKNSNCIVDYKLPEVSPGTLLNQQTAICR</sequence>
<protein>
    <recommendedName>
        <fullName>Fimbrial usher domain-containing protein YdeT</fullName>
    </recommendedName>
</protein>